<sequence>MARYFRRRKFCRFTAEGVQEIDYKDIATLKNYITESGKIVPSRITGTRAKYQRQLARAIKRARYLSLLPYTDRHQ</sequence>
<reference key="1">
    <citation type="journal article" date="2011" name="J. Bacteriol.">
        <title>Comparative genomics of 28 Salmonella enterica isolates: evidence for CRISPR-mediated adaptive sublineage evolution.</title>
        <authorList>
            <person name="Fricke W.F."/>
            <person name="Mammel M.K."/>
            <person name="McDermott P.F."/>
            <person name="Tartera C."/>
            <person name="White D.G."/>
            <person name="Leclerc J.E."/>
            <person name="Ravel J."/>
            <person name="Cebula T.A."/>
        </authorList>
    </citation>
    <scope>NUCLEOTIDE SEQUENCE [LARGE SCALE GENOMIC DNA]</scope>
    <source>
        <strain>SL476</strain>
    </source>
</reference>
<comment type="function">
    <text evidence="1">Binds as a heterodimer with protein bS6 to the central domain of the 16S rRNA, where it helps stabilize the platform of the 30S subunit.</text>
</comment>
<comment type="subunit">
    <text evidence="1">Part of the 30S ribosomal subunit. Forms a tight heterodimer with protein bS6.</text>
</comment>
<comment type="similarity">
    <text evidence="1">Belongs to the bacterial ribosomal protein bS18 family.</text>
</comment>
<accession>B4TFD7</accession>
<evidence type="ECO:0000255" key="1">
    <source>
        <dbReference type="HAMAP-Rule" id="MF_00270"/>
    </source>
</evidence>
<evidence type="ECO:0000305" key="2"/>
<gene>
    <name evidence="1" type="primary">rpsR</name>
    <name type="ordered locus">SeHA_C4811</name>
</gene>
<keyword id="KW-0687">Ribonucleoprotein</keyword>
<keyword id="KW-0689">Ribosomal protein</keyword>
<keyword id="KW-0694">RNA-binding</keyword>
<keyword id="KW-0699">rRNA-binding</keyword>
<organism>
    <name type="scientific">Salmonella heidelberg (strain SL476)</name>
    <dbReference type="NCBI Taxonomy" id="454169"/>
    <lineage>
        <taxon>Bacteria</taxon>
        <taxon>Pseudomonadati</taxon>
        <taxon>Pseudomonadota</taxon>
        <taxon>Gammaproteobacteria</taxon>
        <taxon>Enterobacterales</taxon>
        <taxon>Enterobacteriaceae</taxon>
        <taxon>Salmonella</taxon>
    </lineage>
</organism>
<protein>
    <recommendedName>
        <fullName evidence="1">Small ribosomal subunit protein bS18</fullName>
    </recommendedName>
    <alternativeName>
        <fullName evidence="2">30S ribosomal protein S18</fullName>
    </alternativeName>
</protein>
<name>RS18_SALHS</name>
<proteinExistence type="inferred from homology"/>
<dbReference type="EMBL" id="CP001120">
    <property type="protein sequence ID" value="ACF68465.1"/>
    <property type="molecule type" value="Genomic_DNA"/>
</dbReference>
<dbReference type="RefSeq" id="WP_000135199.1">
    <property type="nucleotide sequence ID" value="NC_011083.1"/>
</dbReference>
<dbReference type="SMR" id="B4TFD7"/>
<dbReference type="GeneID" id="98186237"/>
<dbReference type="KEGG" id="seh:SeHA_C4811"/>
<dbReference type="HOGENOM" id="CLU_148710_2_3_6"/>
<dbReference type="Proteomes" id="UP000001866">
    <property type="component" value="Chromosome"/>
</dbReference>
<dbReference type="GO" id="GO:0022627">
    <property type="term" value="C:cytosolic small ribosomal subunit"/>
    <property type="evidence" value="ECO:0007669"/>
    <property type="project" value="TreeGrafter"/>
</dbReference>
<dbReference type="GO" id="GO:0070181">
    <property type="term" value="F:small ribosomal subunit rRNA binding"/>
    <property type="evidence" value="ECO:0007669"/>
    <property type="project" value="TreeGrafter"/>
</dbReference>
<dbReference type="GO" id="GO:0003735">
    <property type="term" value="F:structural constituent of ribosome"/>
    <property type="evidence" value="ECO:0007669"/>
    <property type="project" value="InterPro"/>
</dbReference>
<dbReference type="GO" id="GO:0006412">
    <property type="term" value="P:translation"/>
    <property type="evidence" value="ECO:0007669"/>
    <property type="project" value="UniProtKB-UniRule"/>
</dbReference>
<dbReference type="FunFam" id="4.10.640.10:FF:000001">
    <property type="entry name" value="30S ribosomal protein S18"/>
    <property type="match status" value="1"/>
</dbReference>
<dbReference type="Gene3D" id="4.10.640.10">
    <property type="entry name" value="Ribosomal protein S18"/>
    <property type="match status" value="1"/>
</dbReference>
<dbReference type="HAMAP" id="MF_00270">
    <property type="entry name" value="Ribosomal_bS18"/>
    <property type="match status" value="1"/>
</dbReference>
<dbReference type="InterPro" id="IPR001648">
    <property type="entry name" value="Ribosomal_bS18"/>
</dbReference>
<dbReference type="InterPro" id="IPR018275">
    <property type="entry name" value="Ribosomal_bS18_CS"/>
</dbReference>
<dbReference type="InterPro" id="IPR036870">
    <property type="entry name" value="Ribosomal_bS18_sf"/>
</dbReference>
<dbReference type="NCBIfam" id="TIGR00165">
    <property type="entry name" value="S18"/>
    <property type="match status" value="1"/>
</dbReference>
<dbReference type="PANTHER" id="PTHR13479">
    <property type="entry name" value="30S RIBOSOMAL PROTEIN S18"/>
    <property type="match status" value="1"/>
</dbReference>
<dbReference type="PANTHER" id="PTHR13479:SF40">
    <property type="entry name" value="SMALL RIBOSOMAL SUBUNIT PROTEIN BS18M"/>
    <property type="match status" value="1"/>
</dbReference>
<dbReference type="Pfam" id="PF01084">
    <property type="entry name" value="Ribosomal_S18"/>
    <property type="match status" value="1"/>
</dbReference>
<dbReference type="PRINTS" id="PR00974">
    <property type="entry name" value="RIBOSOMALS18"/>
</dbReference>
<dbReference type="SUPFAM" id="SSF46911">
    <property type="entry name" value="Ribosomal protein S18"/>
    <property type="match status" value="1"/>
</dbReference>
<dbReference type="PROSITE" id="PS00057">
    <property type="entry name" value="RIBOSOMAL_S18"/>
    <property type="match status" value="1"/>
</dbReference>
<feature type="chain" id="PRO_1000114447" description="Small ribosomal subunit protein bS18">
    <location>
        <begin position="1"/>
        <end position="75"/>
    </location>
</feature>